<name>RBFA_XANOM</name>
<reference key="1">
    <citation type="journal article" date="2005" name="Jpn. Agric. Res. Q.">
        <title>Genome sequence of Xanthomonas oryzae pv. oryzae suggests contribution of large numbers of effector genes and insertion sequences to its race diversity.</title>
        <authorList>
            <person name="Ochiai H."/>
            <person name="Inoue Y."/>
            <person name="Takeya M."/>
            <person name="Sasaki A."/>
            <person name="Kaku H."/>
        </authorList>
    </citation>
    <scope>NUCLEOTIDE SEQUENCE [LARGE SCALE GENOMIC DNA]</scope>
    <source>
        <strain>MAFF 311018</strain>
    </source>
</reference>
<dbReference type="EMBL" id="AP008229">
    <property type="protein sequence ID" value="BAE69805.1"/>
    <property type="molecule type" value="Genomic_DNA"/>
</dbReference>
<dbReference type="RefSeq" id="WP_011259735.1">
    <property type="nucleotide sequence ID" value="NC_007705.1"/>
</dbReference>
<dbReference type="SMR" id="Q2P0X2"/>
<dbReference type="KEGG" id="xom:XOO3050"/>
<dbReference type="HOGENOM" id="CLU_089475_6_3_6"/>
<dbReference type="GO" id="GO:0005829">
    <property type="term" value="C:cytosol"/>
    <property type="evidence" value="ECO:0007669"/>
    <property type="project" value="TreeGrafter"/>
</dbReference>
<dbReference type="GO" id="GO:0043024">
    <property type="term" value="F:ribosomal small subunit binding"/>
    <property type="evidence" value="ECO:0007669"/>
    <property type="project" value="TreeGrafter"/>
</dbReference>
<dbReference type="GO" id="GO:0030490">
    <property type="term" value="P:maturation of SSU-rRNA"/>
    <property type="evidence" value="ECO:0007669"/>
    <property type="project" value="UniProtKB-UniRule"/>
</dbReference>
<dbReference type="Gene3D" id="3.30.300.20">
    <property type="match status" value="1"/>
</dbReference>
<dbReference type="HAMAP" id="MF_00003">
    <property type="entry name" value="RbfA"/>
    <property type="match status" value="1"/>
</dbReference>
<dbReference type="InterPro" id="IPR015946">
    <property type="entry name" value="KH_dom-like_a/b"/>
</dbReference>
<dbReference type="InterPro" id="IPR000238">
    <property type="entry name" value="RbfA"/>
</dbReference>
<dbReference type="InterPro" id="IPR023799">
    <property type="entry name" value="RbfA_dom_sf"/>
</dbReference>
<dbReference type="InterPro" id="IPR020053">
    <property type="entry name" value="Ribosome-bd_factorA_CS"/>
</dbReference>
<dbReference type="NCBIfam" id="TIGR00082">
    <property type="entry name" value="rbfA"/>
    <property type="match status" value="1"/>
</dbReference>
<dbReference type="PANTHER" id="PTHR33515">
    <property type="entry name" value="RIBOSOME-BINDING FACTOR A, CHLOROPLASTIC-RELATED"/>
    <property type="match status" value="1"/>
</dbReference>
<dbReference type="PANTHER" id="PTHR33515:SF1">
    <property type="entry name" value="RIBOSOME-BINDING FACTOR A, CHLOROPLASTIC-RELATED"/>
    <property type="match status" value="1"/>
</dbReference>
<dbReference type="Pfam" id="PF02033">
    <property type="entry name" value="RBFA"/>
    <property type="match status" value="1"/>
</dbReference>
<dbReference type="SUPFAM" id="SSF89919">
    <property type="entry name" value="Ribosome-binding factor A, RbfA"/>
    <property type="match status" value="1"/>
</dbReference>
<dbReference type="PROSITE" id="PS01319">
    <property type="entry name" value="RBFA"/>
    <property type="match status" value="1"/>
</dbReference>
<keyword id="KW-0963">Cytoplasm</keyword>
<keyword id="KW-0690">Ribosome biogenesis</keyword>
<accession>Q2P0X2</accession>
<proteinExistence type="inferred from homology"/>
<evidence type="ECO:0000255" key="1">
    <source>
        <dbReference type="HAMAP-Rule" id="MF_00003"/>
    </source>
</evidence>
<evidence type="ECO:0000256" key="2">
    <source>
        <dbReference type="SAM" id="MobiDB-lite"/>
    </source>
</evidence>
<gene>
    <name evidence="1" type="primary">rbfA</name>
    <name type="ordered locus">XOO3050</name>
</gene>
<protein>
    <recommendedName>
        <fullName evidence="1">Ribosome-binding factor A</fullName>
    </recommendedName>
</protein>
<feature type="chain" id="PRO_1000000246" description="Ribosome-binding factor A">
    <location>
        <begin position="1"/>
        <end position="130"/>
    </location>
</feature>
<feature type="region of interest" description="Disordered" evidence="2">
    <location>
        <begin position="111"/>
        <end position="130"/>
    </location>
</feature>
<comment type="function">
    <text evidence="1">One of several proteins that assist in the late maturation steps of the functional core of the 30S ribosomal subunit. Associates with free 30S ribosomal subunits (but not with 30S subunits that are part of 70S ribosomes or polysomes). Required for efficient processing of 16S rRNA. May interact with the 5'-terminal helix region of 16S rRNA.</text>
</comment>
<comment type="subunit">
    <text evidence="1">Monomer. Binds 30S ribosomal subunits, but not 50S ribosomal subunits or 70S ribosomes.</text>
</comment>
<comment type="subcellular location">
    <subcellularLocation>
        <location evidence="1">Cytoplasm</location>
    </subcellularLocation>
</comment>
<comment type="similarity">
    <text evidence="1">Belongs to the RbfA family.</text>
</comment>
<organism>
    <name type="scientific">Xanthomonas oryzae pv. oryzae (strain MAFF 311018)</name>
    <dbReference type="NCBI Taxonomy" id="342109"/>
    <lineage>
        <taxon>Bacteria</taxon>
        <taxon>Pseudomonadati</taxon>
        <taxon>Pseudomonadota</taxon>
        <taxon>Gammaproteobacteria</taxon>
        <taxon>Lysobacterales</taxon>
        <taxon>Lysobacteraceae</taxon>
        <taxon>Xanthomonas</taxon>
    </lineage>
</organism>
<sequence length="130" mass="14448">MATKSFHRTDRVSAQVRRDLGTIVHAAVRDHGLPSVSVSDVEISRDLAHAKVFVTALQQERSAEAVKGLKDIAGQLRTQLARAMKLRHVPELHFHYDDSVDRGERIDNLLRDLDDVGPGATSSDEDAEQR</sequence>